<feature type="chain" id="PRO_0000186439" description="(+)-delta-cadinene synthase isozyme XC1">
    <location>
        <begin position="1"/>
        <end position="554"/>
    </location>
</feature>
<feature type="region of interest" description="Disordered" evidence="1">
    <location>
        <begin position="1"/>
        <end position="23"/>
    </location>
</feature>
<feature type="short sequence motif" description="DDXXD motif">
    <location>
        <begin position="307"/>
        <end position="311"/>
    </location>
</feature>
<feature type="compositionally biased region" description="Low complexity" evidence="1">
    <location>
        <begin position="1"/>
        <end position="16"/>
    </location>
</feature>
<feature type="binding site">
    <location>
        <position position="307"/>
    </location>
    <ligand>
        <name>Mg(2+)</name>
        <dbReference type="ChEBI" id="CHEBI:18420"/>
        <label>1</label>
    </ligand>
</feature>
<feature type="binding site" evidence="3">
    <location>
        <position position="307"/>
    </location>
    <ligand>
        <name>Mg(2+)</name>
        <dbReference type="ChEBI" id="CHEBI:18420"/>
        <label>2</label>
    </ligand>
</feature>
<feature type="binding site">
    <location>
        <position position="311"/>
    </location>
    <ligand>
        <name>Mg(2+)</name>
        <dbReference type="ChEBI" id="CHEBI:18420"/>
        <label>1</label>
    </ligand>
</feature>
<feature type="binding site" evidence="3">
    <location>
        <position position="311"/>
    </location>
    <ligand>
        <name>Mg(2+)</name>
        <dbReference type="ChEBI" id="CHEBI:18420"/>
        <label>2</label>
    </ligand>
</feature>
<feature type="binding site">
    <location>
        <position position="451"/>
    </location>
    <ligand>
        <name>Mg(2+)</name>
        <dbReference type="ChEBI" id="CHEBI:18420"/>
        <label>3</label>
    </ligand>
</feature>
<feature type="binding site">
    <location>
        <position position="455"/>
    </location>
    <ligand>
        <name>Mg(2+)</name>
        <dbReference type="ChEBI" id="CHEBI:18420"/>
        <label>3</label>
    </ligand>
</feature>
<feature type="mutagenesis site" description="Strongly reduced activity." evidence="2">
    <original>D</original>
    <variation>A</variation>
    <location>
        <position position="307"/>
    </location>
</feature>
<feature type="mutagenesis site" description="Reduces affinity for substrate about 12-fold.">
    <original>D</original>
    <variation>A</variation>
    <location>
        <position position="308"/>
    </location>
</feature>
<feature type="mutagenesis site" description="Strongly reduced activity." evidence="2">
    <original>D</original>
    <variation>A</variation>
    <location>
        <position position="311"/>
    </location>
</feature>
<feature type="mutagenesis site" description="No effect." evidence="2">
    <original>D</original>
    <variation>A</variation>
    <location>
        <position position="451"/>
    </location>
</feature>
<feature type="mutagenesis site" description="No effect." evidence="2">
    <original>D</original>
    <variation>A</variation>
    <location>
        <position position="452"/>
    </location>
</feature>
<feature type="mutagenesis site" description="Strongly reduced activity." evidence="2">
    <original>E</original>
    <variation>A</variation>
    <location>
        <position position="455"/>
    </location>
</feature>
<feature type="turn" evidence="4">
    <location>
        <begin position="31"/>
        <end position="37"/>
    </location>
</feature>
<feature type="helix" evidence="4">
    <location>
        <begin position="46"/>
        <end position="64"/>
    </location>
</feature>
<feature type="helix" evidence="4">
    <location>
        <begin position="70"/>
        <end position="82"/>
    </location>
</feature>
<feature type="helix" evidence="4">
    <location>
        <begin position="86"/>
        <end position="88"/>
    </location>
</feature>
<feature type="helix" evidence="4">
    <location>
        <begin position="90"/>
        <end position="102"/>
    </location>
</feature>
<feature type="helix" evidence="4">
    <location>
        <begin position="111"/>
        <end position="123"/>
    </location>
</feature>
<feature type="helix" evidence="4">
    <location>
        <begin position="130"/>
        <end position="136"/>
    </location>
</feature>
<feature type="strand" evidence="4">
    <location>
        <begin position="141"/>
        <end position="143"/>
    </location>
</feature>
<feature type="helix" evidence="4">
    <location>
        <begin position="145"/>
        <end position="149"/>
    </location>
</feature>
<feature type="helix" evidence="4">
    <location>
        <begin position="151"/>
        <end position="161"/>
    </location>
</feature>
<feature type="helix" evidence="4">
    <location>
        <begin position="169"/>
        <end position="185"/>
    </location>
</feature>
<feature type="helix" evidence="5">
    <location>
        <begin position="186"/>
        <end position="188"/>
    </location>
</feature>
<feature type="helix" evidence="4">
    <location>
        <begin position="193"/>
        <end position="202"/>
    </location>
</feature>
<feature type="turn" evidence="4">
    <location>
        <begin position="205"/>
        <end position="207"/>
    </location>
</feature>
<feature type="helix" evidence="4">
    <location>
        <begin position="210"/>
        <end position="222"/>
    </location>
</feature>
<feature type="helix" evidence="4">
    <location>
        <begin position="229"/>
        <end position="260"/>
    </location>
</feature>
<feature type="helix" evidence="4">
    <location>
        <begin position="262"/>
        <end position="265"/>
    </location>
</feature>
<feature type="helix" evidence="4">
    <location>
        <begin position="273"/>
        <end position="283"/>
    </location>
</feature>
<feature type="helix" evidence="4">
    <location>
        <begin position="287"/>
        <end position="289"/>
    </location>
</feature>
<feature type="helix" evidence="4">
    <location>
        <begin position="290"/>
        <end position="310"/>
    </location>
</feature>
<feature type="helix" evidence="4">
    <location>
        <begin position="316"/>
        <end position="328"/>
    </location>
</feature>
<feature type="helix" evidence="4">
    <location>
        <begin position="331"/>
        <end position="336"/>
    </location>
</feature>
<feature type="helix" evidence="4">
    <location>
        <begin position="339"/>
        <end position="341"/>
    </location>
</feature>
<feature type="helix" evidence="4">
    <location>
        <begin position="342"/>
        <end position="359"/>
    </location>
</feature>
<feature type="helix" evidence="4">
    <location>
        <begin position="360"/>
        <end position="362"/>
    </location>
</feature>
<feature type="helix" evidence="4">
    <location>
        <begin position="366"/>
        <end position="390"/>
    </location>
</feature>
<feature type="helix" evidence="4">
    <location>
        <begin position="397"/>
        <end position="404"/>
    </location>
</feature>
<feature type="helix" evidence="4">
    <location>
        <begin position="405"/>
        <end position="407"/>
    </location>
</feature>
<feature type="helix" evidence="4">
    <location>
        <begin position="410"/>
        <end position="419"/>
    </location>
</feature>
<feature type="helix" evidence="4">
    <location>
        <begin position="427"/>
        <end position="434"/>
    </location>
</feature>
<feature type="helix" evidence="4">
    <location>
        <begin position="438"/>
        <end position="456"/>
    </location>
</feature>
<feature type="helix" evidence="4">
    <location>
        <begin position="468"/>
        <end position="476"/>
    </location>
</feature>
<feature type="helix" evidence="4">
    <location>
        <begin position="480"/>
        <end position="502"/>
    </location>
</feature>
<feature type="strand" evidence="4">
    <location>
        <begin position="503"/>
        <end position="505"/>
    </location>
</feature>
<feature type="helix" evidence="4">
    <location>
        <begin position="510"/>
        <end position="526"/>
    </location>
</feature>
<feature type="helix" evidence="4">
    <location>
        <begin position="538"/>
        <end position="548"/>
    </location>
</feature>
<evidence type="ECO:0000256" key="1">
    <source>
        <dbReference type="SAM" id="MobiDB-lite"/>
    </source>
</evidence>
<evidence type="ECO:0000269" key="2">
    <source>
    </source>
</evidence>
<evidence type="ECO:0000305" key="3"/>
<evidence type="ECO:0007829" key="4">
    <source>
        <dbReference type="PDB" id="3G4D"/>
    </source>
</evidence>
<evidence type="ECO:0007829" key="5">
    <source>
        <dbReference type="PDB" id="3G4F"/>
    </source>
</evidence>
<comment type="function">
    <text evidence="2">Responsible for the cyclization of trans,trans-farnesyl diphosphate (FPP) to (+)-delta cadinene.</text>
</comment>
<comment type="catalytic activity">
    <reaction evidence="2">
        <text>(2E,6E)-farnesyl diphosphate = (1S,8aR)-delta-cadinene + diphosphate</text>
        <dbReference type="Rhea" id="RHEA:19525"/>
        <dbReference type="ChEBI" id="CHEBI:15385"/>
        <dbReference type="ChEBI" id="CHEBI:33019"/>
        <dbReference type="ChEBI" id="CHEBI:175763"/>
        <dbReference type="EC" id="4.2.3.13"/>
    </reaction>
</comment>
<comment type="cofactor">
    <cofactor evidence="2">
        <name>Mg(2+)</name>
        <dbReference type="ChEBI" id="CHEBI:18420"/>
    </cofactor>
    <text evidence="2">Binds 3 Mg(2+) ions per subunit.</text>
</comment>
<comment type="pathway">
    <text>Secondary metabolite biosynthesis; terpenoid biosynthesis.</text>
</comment>
<comment type="domain">
    <text>The Asp-Asp-Xaa-Xaa-Asp/Glu (DDXXD/E) motif is important for the catalytic activity, presumably through binding to Mg(2+).</text>
</comment>
<comment type="similarity">
    <text evidence="3">Belongs to the terpene synthase family.</text>
</comment>
<keyword id="KW-0002">3D-structure</keyword>
<keyword id="KW-0456">Lyase</keyword>
<keyword id="KW-0460">Magnesium</keyword>
<keyword id="KW-0479">Metal-binding</keyword>
<sequence length="554" mass="64138">MASQVSQMPSSSPLSSNKDEMRPKADFQPSIWGDLFLNCPDKNIDAETEKRHQQLKEEVRKMIVAPMANSTQKLAFIDSVQRLGVSYHFTKEIEDELENIYHNNNDAENDLYTTSIRFRLLREHGYNVSCDVFNKFKDEQGNFKSSVTSDVRGLLELYQASYLRVHGEDILDEAISFTTHHLSLAVASLDHPLSEEVSHALKQSIRRGLPRVEARHYLSVYQDIESHNKALLEFAKIDFNMLQFLHRKELSEICRWWKDLDFQRKLPYARDRVVEGYFWISGVYFEPQYSLGRKMLTKVIAMASIVDDTYDSYATYEELIPYTNAIERWDIKCIDEIPEYMKPSYKALLDVYEEMVQLVAEHGRQYRVEYAKNAMIRLAQSYLVEAKWTLQNYKPSFEEFKANALPTCGYAMLAITSFVGMGDIVTPETFKWAASDPKIIQASTIICRFMDDVAEHKFKHRREDDCSAIECYMEEYGVTAQEAYDVFNKHVESAWKDLNQEFLKPTEMPTEVLNRSLNLARVMDVLYREGDGYTYVGKAAKGGITSLLIEPIAL</sequence>
<protein>
    <recommendedName>
        <fullName>(+)-delta-cadinene synthase isozyme XC1</fullName>
        <shortName>D-cadinene synthase XC1</shortName>
        <ecNumber>4.2.3.13</ecNumber>
    </recommendedName>
</protein>
<name>DCS1_GOSAR</name>
<accession>Q39761</accession>
<dbReference type="EC" id="4.2.3.13"/>
<dbReference type="EMBL" id="U23206">
    <property type="protein sequence ID" value="AAA93064.1"/>
    <property type="molecule type" value="mRNA"/>
</dbReference>
<dbReference type="PIR" id="S68365">
    <property type="entry name" value="S68365"/>
</dbReference>
<dbReference type="PDB" id="3G4D">
    <property type="method" value="X-ray"/>
    <property type="resolution" value="2.40 A"/>
    <property type="chains" value="A/B=1-554"/>
</dbReference>
<dbReference type="PDB" id="3G4F">
    <property type="method" value="X-ray"/>
    <property type="resolution" value="2.65 A"/>
    <property type="chains" value="A/B=1-554"/>
</dbReference>
<dbReference type="PDBsum" id="3G4D"/>
<dbReference type="PDBsum" id="3G4F"/>
<dbReference type="SMR" id="Q39761"/>
<dbReference type="KEGG" id="ag:AAA93064"/>
<dbReference type="BRENDA" id="4.2.3.13">
    <property type="organism ID" value="2497"/>
</dbReference>
<dbReference type="UniPathway" id="UPA00213"/>
<dbReference type="EvolutionaryTrace" id="Q39761"/>
<dbReference type="GO" id="GO:0047461">
    <property type="term" value="F:(+)-delta-cadinene synthase activity"/>
    <property type="evidence" value="ECO:0007669"/>
    <property type="project" value="UniProtKB-EC"/>
</dbReference>
<dbReference type="GO" id="GO:0000287">
    <property type="term" value="F:magnesium ion binding"/>
    <property type="evidence" value="ECO:0007669"/>
    <property type="project" value="InterPro"/>
</dbReference>
<dbReference type="GO" id="GO:0016102">
    <property type="term" value="P:diterpenoid biosynthetic process"/>
    <property type="evidence" value="ECO:0007669"/>
    <property type="project" value="InterPro"/>
</dbReference>
<dbReference type="CDD" id="cd00684">
    <property type="entry name" value="Terpene_cyclase_plant_C1"/>
    <property type="match status" value="1"/>
</dbReference>
<dbReference type="FunFam" id="1.10.600.10:FF:000007">
    <property type="entry name" value="Isoprene synthase, chloroplastic"/>
    <property type="match status" value="1"/>
</dbReference>
<dbReference type="FunFam" id="1.50.10.130:FF:000001">
    <property type="entry name" value="Isoprene synthase, chloroplastic"/>
    <property type="match status" value="1"/>
</dbReference>
<dbReference type="Gene3D" id="1.10.600.10">
    <property type="entry name" value="Farnesyl Diphosphate Synthase"/>
    <property type="match status" value="1"/>
</dbReference>
<dbReference type="Gene3D" id="1.50.10.130">
    <property type="entry name" value="Terpene synthase, N-terminal domain"/>
    <property type="match status" value="1"/>
</dbReference>
<dbReference type="InterPro" id="IPR008949">
    <property type="entry name" value="Isoprenoid_synthase_dom_sf"/>
</dbReference>
<dbReference type="InterPro" id="IPR044814">
    <property type="entry name" value="Terpene_cyclase_plant_C1"/>
</dbReference>
<dbReference type="InterPro" id="IPR001906">
    <property type="entry name" value="Terpene_synth_N"/>
</dbReference>
<dbReference type="InterPro" id="IPR036965">
    <property type="entry name" value="Terpene_synth_N_sf"/>
</dbReference>
<dbReference type="InterPro" id="IPR050148">
    <property type="entry name" value="Terpene_synthase-like"/>
</dbReference>
<dbReference type="InterPro" id="IPR005630">
    <property type="entry name" value="Terpene_synthase_metal-bd"/>
</dbReference>
<dbReference type="InterPro" id="IPR008930">
    <property type="entry name" value="Terpenoid_cyclase/PrenylTrfase"/>
</dbReference>
<dbReference type="PANTHER" id="PTHR31225:SF215">
    <property type="entry name" value="(+)-DELTA-CADINENE SYNTHASE"/>
    <property type="match status" value="1"/>
</dbReference>
<dbReference type="PANTHER" id="PTHR31225">
    <property type="entry name" value="OS04G0344100 PROTEIN-RELATED"/>
    <property type="match status" value="1"/>
</dbReference>
<dbReference type="Pfam" id="PF01397">
    <property type="entry name" value="Terpene_synth"/>
    <property type="match status" value="1"/>
</dbReference>
<dbReference type="Pfam" id="PF03936">
    <property type="entry name" value="Terpene_synth_C"/>
    <property type="match status" value="1"/>
</dbReference>
<dbReference type="SFLD" id="SFLDS00005">
    <property type="entry name" value="Isoprenoid_Synthase_Type_I"/>
    <property type="match status" value="1"/>
</dbReference>
<dbReference type="SFLD" id="SFLDG01604">
    <property type="entry name" value="Terpene_Cyclase_Like_1_C_Termi"/>
    <property type="match status" value="1"/>
</dbReference>
<dbReference type="SFLD" id="SFLDG01014">
    <property type="entry name" value="Terpene_Cyclase_Like_1_N-term"/>
    <property type="match status" value="1"/>
</dbReference>
<dbReference type="SUPFAM" id="SSF48239">
    <property type="entry name" value="Terpenoid cyclases/Protein prenyltransferases"/>
    <property type="match status" value="1"/>
</dbReference>
<dbReference type="SUPFAM" id="SSF48576">
    <property type="entry name" value="Terpenoid synthases"/>
    <property type="match status" value="1"/>
</dbReference>
<organism>
    <name type="scientific">Gossypium arboreum</name>
    <name type="common">Tree cotton</name>
    <name type="synonym">Gossypium nanking</name>
    <dbReference type="NCBI Taxonomy" id="29729"/>
    <lineage>
        <taxon>Eukaryota</taxon>
        <taxon>Viridiplantae</taxon>
        <taxon>Streptophyta</taxon>
        <taxon>Embryophyta</taxon>
        <taxon>Tracheophyta</taxon>
        <taxon>Spermatophyta</taxon>
        <taxon>Magnoliopsida</taxon>
        <taxon>eudicotyledons</taxon>
        <taxon>Gunneridae</taxon>
        <taxon>Pentapetalae</taxon>
        <taxon>rosids</taxon>
        <taxon>malvids</taxon>
        <taxon>Malvales</taxon>
        <taxon>Malvaceae</taxon>
        <taxon>Malvoideae</taxon>
        <taxon>Gossypium</taxon>
    </lineage>
</organism>
<proteinExistence type="evidence at protein level"/>
<reference key="1">
    <citation type="journal article" date="1995" name="Arch. Biochem. Biophys.">
        <title>Cloning, expression, and characterization of (+)-delta-cadinene synthase: a catalyst for cotton phytoalexin biosynthesis.</title>
        <authorList>
            <person name="Chen X.-Y."/>
            <person name="Chen Y."/>
            <person name="Heinstein P."/>
            <person name="Davisson V.J."/>
        </authorList>
    </citation>
    <scope>NUCLEOTIDE SEQUENCE [MRNA]</scope>
    <source>
        <strain>cv. Nanking</strain>
    </source>
</reference>
<reference key="2">
    <citation type="journal article" date="2009" name="Biochemistry">
        <title>Crystal structure of (+)-delta-cadinene synthase from Gossypium arboreum and evolutionary divergence of metal binding motifs for catalysis.</title>
        <authorList>
            <person name="Gennadios H.A."/>
            <person name="Gonzalez V."/>
            <person name="Di Costanzo L."/>
            <person name="Li A."/>
            <person name="Yu F."/>
            <person name="Miller D.J."/>
            <person name="Allemann R.K."/>
            <person name="Christianson D.W."/>
        </authorList>
    </citation>
    <scope>X-RAY CRYSTALLOGRAPHY (2.4 ANGSTROMS) IN COMPLEX WITH MAGNESIUM IONS AND SUBSTRATE</scope>
    <scope>FUNCTION</scope>
    <scope>CATALYTIC ACTIVITY</scope>
    <scope>COFACTOR</scope>
    <scope>MUTAGENESIS OF ASP-307; ASP-311; ASP-451; ASP-452 AND GLU-455</scope>
</reference>